<accession>Q32LQ6</accession>
<comment type="function">
    <text evidence="1 2">Lysosomal dipeptide uniporter that selectively exports lysine, arginine or histidine-containing dipeptides with a net positive charge from the lysosome lumen into the cytosol. Could play a role in a specific type of protein O-glycosylation indirectly regulating macrophages migration and tissue invasion (By similarity). Also essential for liver homeostasis (By similarity).</text>
</comment>
<comment type="catalytic activity">
    <reaction evidence="2">
        <text>L-alpha-aminoacyl-L-arginine(out) = L-alpha-aminoacyl-L-arginine(in)</text>
        <dbReference type="Rhea" id="RHEA:79367"/>
        <dbReference type="ChEBI" id="CHEBI:229968"/>
    </reaction>
</comment>
<comment type="catalytic activity">
    <reaction evidence="2">
        <text>L-arginyl-L-alpha-amino acid(out) = L-arginyl-L-alpha-amino acid(in)</text>
        <dbReference type="Rhea" id="RHEA:79371"/>
        <dbReference type="ChEBI" id="CHEBI:84315"/>
    </reaction>
</comment>
<comment type="catalytic activity">
    <reaction evidence="2">
        <text>L-arginyl-glycine(out) = L-arginyl-glycine(in)</text>
        <dbReference type="Rhea" id="RHEA:79391"/>
        <dbReference type="ChEBI" id="CHEBI:229955"/>
    </reaction>
</comment>
<comment type="catalytic activity">
    <reaction evidence="2">
        <text>L-alpha-aminoacyl-L-lysine(out) = L-alpha-aminoacyl-L-lysine(in)</text>
        <dbReference type="Rhea" id="RHEA:79383"/>
        <dbReference type="ChEBI" id="CHEBI:229966"/>
    </reaction>
</comment>
<comment type="catalytic activity">
    <reaction evidence="2">
        <text>L-aspartyl-L-lysine(out) = L-aspartyl-L-lysine(in)</text>
        <dbReference type="Rhea" id="RHEA:79411"/>
        <dbReference type="ChEBI" id="CHEBI:229953"/>
    </reaction>
</comment>
<comment type="catalytic activity">
    <reaction evidence="2">
        <text>L-alanyl-L-lysine(out) = L-alanyl-L-lysine(in)</text>
        <dbReference type="Rhea" id="RHEA:79415"/>
        <dbReference type="ChEBI" id="CHEBI:192470"/>
    </reaction>
</comment>
<comment type="catalytic activity">
    <reaction evidence="2">
        <text>L-lysyl-L-alpha-amino acid(out) = L-lysyl-L-alpha-amino acid(in)</text>
        <dbReference type="Rhea" id="RHEA:79387"/>
        <dbReference type="ChEBI" id="CHEBI:229965"/>
    </reaction>
</comment>
<comment type="catalytic activity">
    <reaction evidence="2">
        <text>L-lysyl-L-alanine(out) = L-lysyl-L-alanine(in)</text>
        <dbReference type="Rhea" id="RHEA:79399"/>
        <dbReference type="ChEBI" id="CHEBI:229954"/>
    </reaction>
</comment>
<comment type="catalytic activity">
    <reaction evidence="2">
        <text>L-lysyl-L-lysine(out) = L-lysyl-L-lysine(in)</text>
        <dbReference type="Rhea" id="RHEA:79403"/>
        <dbReference type="ChEBI" id="CHEBI:229956"/>
    </reaction>
</comment>
<comment type="catalytic activity">
    <reaction evidence="2">
        <text>L-lysyl-glycine(out) = L-lysyl-glycine(in)</text>
        <dbReference type="Rhea" id="RHEA:79407"/>
        <dbReference type="ChEBI" id="CHEBI:191202"/>
    </reaction>
</comment>
<comment type="catalytic activity">
    <reaction evidence="2">
        <text>L-alpha-aminoacyl-L-histidine(out) = L-alpha-aminoacyl-L-histidine(in)</text>
        <dbReference type="Rhea" id="RHEA:79375"/>
        <dbReference type="ChEBI" id="CHEBI:229967"/>
    </reaction>
</comment>
<comment type="catalytic activity">
    <reaction evidence="2">
        <text>L-histidyl-L-alpha-amino acid(out) = L-histidyl-L-alpha-amino acid(in)</text>
        <dbReference type="Rhea" id="RHEA:79379"/>
        <dbReference type="ChEBI" id="CHEBI:229964"/>
    </reaction>
</comment>
<comment type="catalytic activity">
    <reaction evidence="2">
        <text>L-histidyl-glycine(out) = L-histidyl-glycine(in)</text>
        <dbReference type="Rhea" id="RHEA:79395"/>
        <dbReference type="ChEBI" id="CHEBI:229957"/>
    </reaction>
</comment>
<comment type="subunit">
    <text evidence="1">Homodimer. Interacts with lysosomal protein GLMP (via lumenal domain); the interaction starts while both proteins are still in the endoplasmic reticulum and is required for stabilization of MFSD1 in lysosomes but has no direct effect on its targeting to lysosomes or transporter activity.</text>
</comment>
<comment type="subcellular location">
    <subcellularLocation>
        <location evidence="1">Lysosome membrane</location>
        <topology evidence="3">Multi-pass membrane protein</topology>
    </subcellularLocation>
</comment>
<comment type="domain">
    <text evidence="1">The dileucine internalization motif is required for lysosomal localization.</text>
</comment>
<comment type="similarity">
    <text evidence="5">Belongs to the major facilitator superfamily.</text>
</comment>
<sequence>MADREEHQGLLDGDRDEDEGDKAPSVHLNPICDPNHLLHRILVLIFMCFLGFGSYFCYDNPAALQSQVIQDMNLNTASFMQLYAWYSWPNVVLCFLGGFLLDRVFGIRLGTVIFSLFVLVGQIIFAAGALANHFWLMNVGRFVFGIGGESLAVAQNTYAVNWFKGKELNLVFGLQLSMARLGSTVNMNVIGWVYGRIQMSMGSAGPTTLGITLMIAASTCLFSLICALVLGFLDKRAERILNKEQGKTGEVIKLTDVKDFSVSLWLIFIICVAYYVAIFPFIGLGQVFFIEKFGFTPVQARAINSVVYIISAPASPLLGFLVDKTGRNVMWVMLAVITTLLSHMMLAFTFWNPWIAMSLLGVSYSLLACALWPMVAFVVPEHQLGTAYGFMQSIQNLGLAVMSIAAGSILDVRGYLFLEVFFIACLCMALLAVVLLYLFDYYKEGGLNLSAATRSKRAKPE</sequence>
<reference key="1">
    <citation type="submission" date="2005-11" db="EMBL/GenBank/DDBJ databases">
        <authorList>
            <consortium name="NIH - Zebrafish Gene Collection (ZGC) project"/>
        </authorList>
    </citation>
    <scope>NUCLEOTIDE SEQUENCE [LARGE SCALE MRNA]</scope>
    <source>
        <tissue>Liver</tissue>
    </source>
</reference>
<evidence type="ECO:0000250" key="1">
    <source>
        <dbReference type="UniProtKB" id="Q9DC37"/>
    </source>
</evidence>
<evidence type="ECO:0000250" key="2">
    <source>
        <dbReference type="UniProtKB" id="Q9H3U5"/>
    </source>
</evidence>
<evidence type="ECO:0000255" key="3"/>
<evidence type="ECO:0000256" key="4">
    <source>
        <dbReference type="SAM" id="MobiDB-lite"/>
    </source>
</evidence>
<evidence type="ECO:0000305" key="5"/>
<feature type="chain" id="PRO_0000273386" description="Lysosomal dipeptide transporter MFSD1">
    <location>
        <begin position="1"/>
        <end position="461"/>
    </location>
</feature>
<feature type="transmembrane region" description="Helical" evidence="3">
    <location>
        <begin position="37"/>
        <end position="57"/>
    </location>
</feature>
<feature type="transmembrane region" description="Helical" evidence="3">
    <location>
        <begin position="81"/>
        <end position="101"/>
    </location>
</feature>
<feature type="transmembrane region" description="Helical" evidence="3">
    <location>
        <begin position="111"/>
        <end position="131"/>
    </location>
</feature>
<feature type="transmembrane region" description="Helical" evidence="3">
    <location>
        <begin position="134"/>
        <end position="154"/>
    </location>
</feature>
<feature type="transmembrane region" description="Helical" evidence="3">
    <location>
        <begin position="264"/>
        <end position="284"/>
    </location>
</feature>
<feature type="transmembrane region" description="Helical" evidence="3">
    <location>
        <begin position="302"/>
        <end position="322"/>
    </location>
</feature>
<feature type="transmembrane region" description="Helical" evidence="3">
    <location>
        <begin position="331"/>
        <end position="351"/>
    </location>
</feature>
<feature type="transmembrane region" description="Helical" evidence="3">
    <location>
        <begin position="359"/>
        <end position="379"/>
    </location>
</feature>
<feature type="transmembrane region" description="Helical" evidence="3">
    <location>
        <begin position="390"/>
        <end position="410"/>
    </location>
</feature>
<feature type="transmembrane region" description="Helical" evidence="3">
    <location>
        <begin position="416"/>
        <end position="436"/>
    </location>
</feature>
<feature type="region of interest" description="Disordered" evidence="4">
    <location>
        <begin position="1"/>
        <end position="22"/>
    </location>
</feature>
<feature type="short sequence motif" description="Dileucine internalization motif" evidence="1">
    <location>
        <begin position="10"/>
        <end position="11"/>
    </location>
</feature>
<feature type="compositionally biased region" description="Basic and acidic residues" evidence="4">
    <location>
        <begin position="1"/>
        <end position="13"/>
    </location>
</feature>
<gene>
    <name type="primary">mfsd1</name>
    <name type="ORF">zgc:123187</name>
</gene>
<keyword id="KW-0458">Lysosome</keyword>
<keyword id="KW-0472">Membrane</keyword>
<keyword id="KW-1185">Reference proteome</keyword>
<keyword id="KW-0812">Transmembrane</keyword>
<keyword id="KW-1133">Transmembrane helix</keyword>
<keyword id="KW-0813">Transport</keyword>
<dbReference type="EMBL" id="BC109468">
    <property type="protein sequence ID" value="AAI09469.1"/>
    <property type="molecule type" value="mRNA"/>
</dbReference>
<dbReference type="RefSeq" id="NP_001032503.1">
    <property type="nucleotide sequence ID" value="NM_001037426.1"/>
</dbReference>
<dbReference type="SMR" id="Q32LQ6"/>
<dbReference type="FunCoup" id="Q32LQ6">
    <property type="interactions" value="807"/>
</dbReference>
<dbReference type="STRING" id="7955.ENSDARP00000132899"/>
<dbReference type="GeneID" id="641486"/>
<dbReference type="KEGG" id="dre:641486"/>
<dbReference type="AGR" id="ZFIN:ZDB-GENE-051120-153"/>
<dbReference type="CTD" id="64747"/>
<dbReference type="ZFIN" id="ZDB-GENE-051120-153">
    <property type="gene designation" value="mfsd1"/>
</dbReference>
<dbReference type="InParanoid" id="Q32LQ6"/>
<dbReference type="OrthoDB" id="424834at2759"/>
<dbReference type="PhylomeDB" id="Q32LQ6"/>
<dbReference type="PRO" id="PR:Q32LQ6"/>
<dbReference type="Proteomes" id="UP000000437">
    <property type="component" value="Chromosome 15"/>
</dbReference>
<dbReference type="GO" id="GO:0005765">
    <property type="term" value="C:lysosomal membrane"/>
    <property type="evidence" value="ECO:0000250"/>
    <property type="project" value="UniProtKB"/>
</dbReference>
<dbReference type="GO" id="GO:0005764">
    <property type="term" value="C:lysosome"/>
    <property type="evidence" value="ECO:0000250"/>
    <property type="project" value="UniProtKB"/>
</dbReference>
<dbReference type="GO" id="GO:0160178">
    <property type="term" value="F:dipeptide uniporter activity"/>
    <property type="evidence" value="ECO:0000250"/>
    <property type="project" value="UniProtKB"/>
</dbReference>
<dbReference type="GO" id="GO:0042803">
    <property type="term" value="F:protein homodimerization activity"/>
    <property type="evidence" value="ECO:0000250"/>
    <property type="project" value="UniProtKB"/>
</dbReference>
<dbReference type="GO" id="GO:0141204">
    <property type="term" value="P:dipeptide transmembrane transport from lysosomal lumen to cytosol"/>
    <property type="evidence" value="ECO:0000250"/>
    <property type="project" value="UniProtKB"/>
</dbReference>
<dbReference type="GO" id="GO:0061462">
    <property type="term" value="P:protein localization to lysosome"/>
    <property type="evidence" value="ECO:0000250"/>
    <property type="project" value="UniProtKB"/>
</dbReference>
<dbReference type="GO" id="GO:0050821">
    <property type="term" value="P:protein stabilization"/>
    <property type="evidence" value="ECO:0000250"/>
    <property type="project" value="UniProtKB"/>
</dbReference>
<dbReference type="CDD" id="cd17340">
    <property type="entry name" value="MFS_MFSD1"/>
    <property type="match status" value="1"/>
</dbReference>
<dbReference type="Gene3D" id="1.20.1250.20">
    <property type="entry name" value="MFS general substrate transporter like domains"/>
    <property type="match status" value="2"/>
</dbReference>
<dbReference type="InterPro" id="IPR011701">
    <property type="entry name" value="MFS"/>
</dbReference>
<dbReference type="InterPro" id="IPR020846">
    <property type="entry name" value="MFS_dom"/>
</dbReference>
<dbReference type="InterPro" id="IPR036259">
    <property type="entry name" value="MFS_trans_sf"/>
</dbReference>
<dbReference type="InterPro" id="IPR052187">
    <property type="entry name" value="MFSD1"/>
</dbReference>
<dbReference type="PANTHER" id="PTHR23512">
    <property type="entry name" value="MAJOR FACILITATOR SUPERFAMILY DOMAIN-CONTAINING PROTEIN 1"/>
    <property type="match status" value="1"/>
</dbReference>
<dbReference type="PANTHER" id="PTHR23512:SF3">
    <property type="entry name" value="MAJOR FACILITATOR SUPERFAMILY DOMAIN-CONTAINING PROTEIN 1"/>
    <property type="match status" value="1"/>
</dbReference>
<dbReference type="Pfam" id="PF07690">
    <property type="entry name" value="MFS_1"/>
    <property type="match status" value="1"/>
</dbReference>
<dbReference type="SUPFAM" id="SSF103473">
    <property type="entry name" value="MFS general substrate transporter"/>
    <property type="match status" value="1"/>
</dbReference>
<dbReference type="PROSITE" id="PS50850">
    <property type="entry name" value="MFS"/>
    <property type="match status" value="1"/>
</dbReference>
<organism>
    <name type="scientific">Danio rerio</name>
    <name type="common">Zebrafish</name>
    <name type="synonym">Brachydanio rerio</name>
    <dbReference type="NCBI Taxonomy" id="7955"/>
    <lineage>
        <taxon>Eukaryota</taxon>
        <taxon>Metazoa</taxon>
        <taxon>Chordata</taxon>
        <taxon>Craniata</taxon>
        <taxon>Vertebrata</taxon>
        <taxon>Euteleostomi</taxon>
        <taxon>Actinopterygii</taxon>
        <taxon>Neopterygii</taxon>
        <taxon>Teleostei</taxon>
        <taxon>Ostariophysi</taxon>
        <taxon>Cypriniformes</taxon>
        <taxon>Danionidae</taxon>
        <taxon>Danioninae</taxon>
        <taxon>Danio</taxon>
    </lineage>
</organism>
<protein>
    <recommendedName>
        <fullName evidence="2">Lysosomal dipeptide transporter MFSD1</fullName>
    </recommendedName>
    <alternativeName>
        <fullName>Major facilitator superfamily domain-containing protein 1</fullName>
    </alternativeName>
</protein>
<name>MFSD1_DANRE</name>
<proteinExistence type="evidence at transcript level"/>